<evidence type="ECO:0000255" key="1">
    <source>
        <dbReference type="HAMAP-Rule" id="MF_01346"/>
    </source>
</evidence>
<organism>
    <name type="scientific">Rhizobium meliloti (strain 1021)</name>
    <name type="common">Ensifer meliloti</name>
    <name type="synonym">Sinorhizobium meliloti</name>
    <dbReference type="NCBI Taxonomy" id="266834"/>
    <lineage>
        <taxon>Bacteria</taxon>
        <taxon>Pseudomonadati</taxon>
        <taxon>Pseudomonadota</taxon>
        <taxon>Alphaproteobacteria</taxon>
        <taxon>Hyphomicrobiales</taxon>
        <taxon>Rhizobiaceae</taxon>
        <taxon>Sinorhizobium/Ensifer group</taxon>
        <taxon>Sinorhizobium</taxon>
    </lineage>
</organism>
<comment type="function">
    <text evidence="1">Produces ATP from ADP in the presence of a proton gradient across the membrane. The alpha chain is a regulatory subunit.</text>
</comment>
<comment type="catalytic activity">
    <reaction evidence="1">
        <text>ATP + H2O + 4 H(+)(in) = ADP + phosphate + 5 H(+)(out)</text>
        <dbReference type="Rhea" id="RHEA:57720"/>
        <dbReference type="ChEBI" id="CHEBI:15377"/>
        <dbReference type="ChEBI" id="CHEBI:15378"/>
        <dbReference type="ChEBI" id="CHEBI:30616"/>
        <dbReference type="ChEBI" id="CHEBI:43474"/>
        <dbReference type="ChEBI" id="CHEBI:456216"/>
        <dbReference type="EC" id="7.1.2.2"/>
    </reaction>
</comment>
<comment type="subunit">
    <text evidence="1">F-type ATPases have 2 components, CF(1) - the catalytic core - and CF(0) - the membrane proton channel. CF(1) has five subunits: alpha(3), beta(3), gamma(1), delta(1), epsilon(1). CF(0) has three main subunits: a(1), b(2) and c(9-12). The alpha and beta chains form an alternating ring which encloses part of the gamma chain. CF(1) is attached to CF(0) by a central stalk formed by the gamma and epsilon chains, while a peripheral stalk is formed by the delta and b chains.</text>
</comment>
<comment type="subcellular location">
    <subcellularLocation>
        <location evidence="1">Cell inner membrane</location>
        <topology evidence="1">Peripheral membrane protein</topology>
    </subcellularLocation>
</comment>
<comment type="similarity">
    <text evidence="1">Belongs to the ATPase alpha/beta chains family.</text>
</comment>
<name>ATPA_RHIME</name>
<sequence>MDIRAAEISAILKDQIKNFGQEAEVSEVGQVLSVGDGIARVYGLDNVQAGEMVEFPGGIRGMALNLEADNVGVVIFGSDRDIKEGDTVKRTGAIVDVPVGPELLGRVVDALGNPIDGKGPINAKQRARVDVKAPGIIPRKSVHEPMSTGLKAIDALIPVGRGQRELVIGDRQTGKTAIILDTILNQKAIHDNGPEGDKLYCVYVAIGQKRSTVAQFVKVLEERGALQYSIIVAATASDPAPMQYLAPFAGCAMGEYFRDNGKHALIGYDDLSKQAVAYRQMSLLLRRPPGREAYPGDVFYLHSRLLERAAKLSDERGAGSLTALPVIETQGNDVSAFIPTNVISITDGQIFLETDLFYQGIRPAVNVGLSVSRVGSSAQIKAMKQVAGSIKGELAQYREMAAFAQFGSDLDAATQRLLNRGARLTELLKQPQFSPLKTEEQVAVIFAGVNGYLDKLPVSDVGKFEHGLLSYLRSEGKAVLDTIRTEKAISDDTKAKLKGAIDSFAKSFA</sequence>
<keyword id="KW-0066">ATP synthesis</keyword>
<keyword id="KW-0067">ATP-binding</keyword>
<keyword id="KW-0997">Cell inner membrane</keyword>
<keyword id="KW-1003">Cell membrane</keyword>
<keyword id="KW-0139">CF(1)</keyword>
<keyword id="KW-0375">Hydrogen ion transport</keyword>
<keyword id="KW-0406">Ion transport</keyword>
<keyword id="KW-0472">Membrane</keyword>
<keyword id="KW-0547">Nucleotide-binding</keyword>
<keyword id="KW-1185">Reference proteome</keyword>
<keyword id="KW-1278">Translocase</keyword>
<keyword id="KW-0813">Transport</keyword>
<reference key="1">
    <citation type="journal article" date="2001" name="Proc. Natl. Acad. Sci. U.S.A.">
        <title>Analysis of the chromosome sequence of the legume symbiont Sinorhizobium meliloti strain 1021.</title>
        <authorList>
            <person name="Capela D."/>
            <person name="Barloy-Hubler F."/>
            <person name="Gouzy J."/>
            <person name="Bothe G."/>
            <person name="Ampe F."/>
            <person name="Batut J."/>
            <person name="Boistard P."/>
            <person name="Becker A."/>
            <person name="Boutry M."/>
            <person name="Cadieu E."/>
            <person name="Dreano S."/>
            <person name="Gloux S."/>
            <person name="Godrie T."/>
            <person name="Goffeau A."/>
            <person name="Kahn D."/>
            <person name="Kiss E."/>
            <person name="Lelaure V."/>
            <person name="Masuy D."/>
            <person name="Pohl T."/>
            <person name="Portetelle D."/>
            <person name="Puehler A."/>
            <person name="Purnelle B."/>
            <person name="Ramsperger U."/>
            <person name="Renard C."/>
            <person name="Thebault P."/>
            <person name="Vandenbol M."/>
            <person name="Weidner S."/>
            <person name="Galibert F."/>
        </authorList>
    </citation>
    <scope>NUCLEOTIDE SEQUENCE [LARGE SCALE GENOMIC DNA]</scope>
    <source>
        <strain>1021</strain>
    </source>
</reference>
<reference key="2">
    <citation type="journal article" date="2001" name="Science">
        <title>The composite genome of the legume symbiont Sinorhizobium meliloti.</title>
        <authorList>
            <person name="Galibert F."/>
            <person name="Finan T.M."/>
            <person name="Long S.R."/>
            <person name="Puehler A."/>
            <person name="Abola P."/>
            <person name="Ampe F."/>
            <person name="Barloy-Hubler F."/>
            <person name="Barnett M.J."/>
            <person name="Becker A."/>
            <person name="Boistard P."/>
            <person name="Bothe G."/>
            <person name="Boutry M."/>
            <person name="Bowser L."/>
            <person name="Buhrmester J."/>
            <person name="Cadieu E."/>
            <person name="Capela D."/>
            <person name="Chain P."/>
            <person name="Cowie A."/>
            <person name="Davis R.W."/>
            <person name="Dreano S."/>
            <person name="Federspiel N.A."/>
            <person name="Fisher R.F."/>
            <person name="Gloux S."/>
            <person name="Godrie T."/>
            <person name="Goffeau A."/>
            <person name="Golding B."/>
            <person name="Gouzy J."/>
            <person name="Gurjal M."/>
            <person name="Hernandez-Lucas I."/>
            <person name="Hong A."/>
            <person name="Huizar L."/>
            <person name="Hyman R.W."/>
            <person name="Jones T."/>
            <person name="Kahn D."/>
            <person name="Kahn M.L."/>
            <person name="Kalman S."/>
            <person name="Keating D.H."/>
            <person name="Kiss E."/>
            <person name="Komp C."/>
            <person name="Lelaure V."/>
            <person name="Masuy D."/>
            <person name="Palm C."/>
            <person name="Peck M.C."/>
            <person name="Pohl T.M."/>
            <person name="Portetelle D."/>
            <person name="Purnelle B."/>
            <person name="Ramsperger U."/>
            <person name="Surzycki R."/>
            <person name="Thebault P."/>
            <person name="Vandenbol M."/>
            <person name="Vorhoelter F.J."/>
            <person name="Weidner S."/>
            <person name="Wells D.H."/>
            <person name="Wong K."/>
            <person name="Yeh K.-C."/>
            <person name="Batut J."/>
        </authorList>
    </citation>
    <scope>NUCLEOTIDE SEQUENCE [LARGE SCALE GENOMIC DNA]</scope>
    <source>
        <strain>1021</strain>
    </source>
</reference>
<gene>
    <name evidence="1" type="primary">atpA</name>
    <name type="ordered locus">R03036</name>
    <name type="ORF">SMc02499</name>
</gene>
<accession>Q92LK6</accession>
<feature type="chain" id="PRO_0000238338" description="ATP synthase subunit alpha">
    <location>
        <begin position="1"/>
        <end position="509"/>
    </location>
</feature>
<feature type="binding site" evidence="1">
    <location>
        <begin position="169"/>
        <end position="176"/>
    </location>
    <ligand>
        <name>ATP</name>
        <dbReference type="ChEBI" id="CHEBI:30616"/>
    </ligand>
</feature>
<feature type="site" description="Required for activity" evidence="1">
    <location>
        <position position="370"/>
    </location>
</feature>
<dbReference type="EC" id="7.1.2.2" evidence="1"/>
<dbReference type="EMBL" id="AL591688">
    <property type="protein sequence ID" value="CAC47615.1"/>
    <property type="molecule type" value="Genomic_DNA"/>
</dbReference>
<dbReference type="RefSeq" id="NP_387142.1">
    <property type="nucleotide sequence ID" value="NC_003047.1"/>
</dbReference>
<dbReference type="RefSeq" id="WP_003530298.1">
    <property type="nucleotide sequence ID" value="NC_003047.1"/>
</dbReference>
<dbReference type="SMR" id="Q92LK6"/>
<dbReference type="EnsemblBacteria" id="CAC47615">
    <property type="protein sequence ID" value="CAC47615"/>
    <property type="gene ID" value="SMc02499"/>
</dbReference>
<dbReference type="GeneID" id="89574056"/>
<dbReference type="KEGG" id="sme:SMc02499"/>
<dbReference type="PATRIC" id="fig|266834.11.peg.4569"/>
<dbReference type="eggNOG" id="COG0056">
    <property type="taxonomic scope" value="Bacteria"/>
</dbReference>
<dbReference type="HOGENOM" id="CLU_010091_2_1_5"/>
<dbReference type="OrthoDB" id="9803053at2"/>
<dbReference type="Proteomes" id="UP000001976">
    <property type="component" value="Chromosome"/>
</dbReference>
<dbReference type="GO" id="GO:0005886">
    <property type="term" value="C:plasma membrane"/>
    <property type="evidence" value="ECO:0007669"/>
    <property type="project" value="UniProtKB-SubCell"/>
</dbReference>
<dbReference type="GO" id="GO:0045259">
    <property type="term" value="C:proton-transporting ATP synthase complex"/>
    <property type="evidence" value="ECO:0007669"/>
    <property type="project" value="UniProtKB-KW"/>
</dbReference>
<dbReference type="GO" id="GO:0043531">
    <property type="term" value="F:ADP binding"/>
    <property type="evidence" value="ECO:0007669"/>
    <property type="project" value="TreeGrafter"/>
</dbReference>
<dbReference type="GO" id="GO:0005524">
    <property type="term" value="F:ATP binding"/>
    <property type="evidence" value="ECO:0007669"/>
    <property type="project" value="UniProtKB-UniRule"/>
</dbReference>
<dbReference type="GO" id="GO:0046933">
    <property type="term" value="F:proton-transporting ATP synthase activity, rotational mechanism"/>
    <property type="evidence" value="ECO:0007669"/>
    <property type="project" value="UniProtKB-UniRule"/>
</dbReference>
<dbReference type="CDD" id="cd18113">
    <property type="entry name" value="ATP-synt_F1_alpha_C"/>
    <property type="match status" value="1"/>
</dbReference>
<dbReference type="CDD" id="cd18116">
    <property type="entry name" value="ATP-synt_F1_alpha_N"/>
    <property type="match status" value="1"/>
</dbReference>
<dbReference type="CDD" id="cd01132">
    <property type="entry name" value="F1-ATPase_alpha_CD"/>
    <property type="match status" value="1"/>
</dbReference>
<dbReference type="FunFam" id="1.20.150.20:FF:000001">
    <property type="entry name" value="ATP synthase subunit alpha"/>
    <property type="match status" value="1"/>
</dbReference>
<dbReference type="FunFam" id="2.40.30.20:FF:000001">
    <property type="entry name" value="ATP synthase subunit alpha"/>
    <property type="match status" value="1"/>
</dbReference>
<dbReference type="FunFam" id="3.40.50.300:FF:002432">
    <property type="entry name" value="ATP synthase subunit alpha, mitochondrial"/>
    <property type="match status" value="1"/>
</dbReference>
<dbReference type="Gene3D" id="2.40.30.20">
    <property type="match status" value="1"/>
</dbReference>
<dbReference type="Gene3D" id="1.20.150.20">
    <property type="entry name" value="ATP synthase alpha/beta chain, C-terminal domain"/>
    <property type="match status" value="1"/>
</dbReference>
<dbReference type="Gene3D" id="3.40.50.300">
    <property type="entry name" value="P-loop containing nucleotide triphosphate hydrolases"/>
    <property type="match status" value="1"/>
</dbReference>
<dbReference type="HAMAP" id="MF_01346">
    <property type="entry name" value="ATP_synth_alpha_bact"/>
    <property type="match status" value="1"/>
</dbReference>
<dbReference type="InterPro" id="IPR023366">
    <property type="entry name" value="ATP_synth_asu-like_sf"/>
</dbReference>
<dbReference type="InterPro" id="IPR000793">
    <property type="entry name" value="ATP_synth_asu_C"/>
</dbReference>
<dbReference type="InterPro" id="IPR038376">
    <property type="entry name" value="ATP_synth_asu_C_sf"/>
</dbReference>
<dbReference type="InterPro" id="IPR033732">
    <property type="entry name" value="ATP_synth_F1_a_nt-bd_dom"/>
</dbReference>
<dbReference type="InterPro" id="IPR005294">
    <property type="entry name" value="ATP_synth_F1_asu"/>
</dbReference>
<dbReference type="InterPro" id="IPR020003">
    <property type="entry name" value="ATPase_a/bsu_AS"/>
</dbReference>
<dbReference type="InterPro" id="IPR004100">
    <property type="entry name" value="ATPase_F1/V1/A1_a/bsu_N"/>
</dbReference>
<dbReference type="InterPro" id="IPR036121">
    <property type="entry name" value="ATPase_F1/V1/A1_a/bsu_N_sf"/>
</dbReference>
<dbReference type="InterPro" id="IPR000194">
    <property type="entry name" value="ATPase_F1/V1/A1_a/bsu_nucl-bd"/>
</dbReference>
<dbReference type="InterPro" id="IPR027417">
    <property type="entry name" value="P-loop_NTPase"/>
</dbReference>
<dbReference type="NCBIfam" id="TIGR00962">
    <property type="entry name" value="atpA"/>
    <property type="match status" value="1"/>
</dbReference>
<dbReference type="NCBIfam" id="NF009884">
    <property type="entry name" value="PRK13343.1"/>
    <property type="match status" value="1"/>
</dbReference>
<dbReference type="PANTHER" id="PTHR48082">
    <property type="entry name" value="ATP SYNTHASE SUBUNIT ALPHA, MITOCHONDRIAL"/>
    <property type="match status" value="1"/>
</dbReference>
<dbReference type="PANTHER" id="PTHR48082:SF2">
    <property type="entry name" value="ATP SYNTHASE SUBUNIT ALPHA, MITOCHONDRIAL"/>
    <property type="match status" value="1"/>
</dbReference>
<dbReference type="Pfam" id="PF00006">
    <property type="entry name" value="ATP-synt_ab"/>
    <property type="match status" value="1"/>
</dbReference>
<dbReference type="Pfam" id="PF00306">
    <property type="entry name" value="ATP-synt_ab_C"/>
    <property type="match status" value="1"/>
</dbReference>
<dbReference type="Pfam" id="PF02874">
    <property type="entry name" value="ATP-synt_ab_N"/>
    <property type="match status" value="1"/>
</dbReference>
<dbReference type="PIRSF" id="PIRSF039088">
    <property type="entry name" value="F_ATPase_subunit_alpha"/>
    <property type="match status" value="1"/>
</dbReference>
<dbReference type="SUPFAM" id="SSF47917">
    <property type="entry name" value="C-terminal domain of alpha and beta subunits of F1 ATP synthase"/>
    <property type="match status" value="1"/>
</dbReference>
<dbReference type="SUPFAM" id="SSF50615">
    <property type="entry name" value="N-terminal domain of alpha and beta subunits of F1 ATP synthase"/>
    <property type="match status" value="1"/>
</dbReference>
<dbReference type="SUPFAM" id="SSF52540">
    <property type="entry name" value="P-loop containing nucleoside triphosphate hydrolases"/>
    <property type="match status" value="1"/>
</dbReference>
<dbReference type="PROSITE" id="PS00152">
    <property type="entry name" value="ATPASE_ALPHA_BETA"/>
    <property type="match status" value="1"/>
</dbReference>
<proteinExistence type="inferred from homology"/>
<protein>
    <recommendedName>
        <fullName evidence="1">ATP synthase subunit alpha</fullName>
        <ecNumber evidence="1">7.1.2.2</ecNumber>
    </recommendedName>
    <alternativeName>
        <fullName evidence="1">ATP synthase F1 sector subunit alpha</fullName>
    </alternativeName>
    <alternativeName>
        <fullName evidence="1">F-ATPase subunit alpha</fullName>
    </alternativeName>
</protein>